<sequence>MTEGRCAQHPDGLDVQDVCDPDDPRLDDFRDLNSIDRRPDLPTGKALVIAEGVLVVQRMLASRFTPLALFGTDRRLAELKDDLAGVGAPYYRASADVMARVIGFHLNRGVLAAAGRVPEPSVAQVVAGARTVAVLEGVNDHENLGSIFRNAAGLSVDAVVFGTGCADPLYRRAVRVSMGHALLVPYARAADWPTELMTLKESGFRLLAMTPHGNACKLPEAIAAVSHERIALLVGAEGPGLTAAALRISDVRVRIPMSRGTDSLNVATAAALAFYERTRSGHHIGPGT</sequence>
<gene>
    <name type="ordered locus">Rv0881</name>
    <name type="ORF">MTCY31.09</name>
</gene>
<proteinExistence type="inferred from homology"/>
<dbReference type="EC" id="2.1.1.-"/>
<dbReference type="EMBL" id="AL123456">
    <property type="protein sequence ID" value="CCP43629.1"/>
    <property type="molecule type" value="Genomic_DNA"/>
</dbReference>
<dbReference type="PIR" id="F70780">
    <property type="entry name" value="F70780"/>
</dbReference>
<dbReference type="RefSeq" id="NP_215396.1">
    <property type="nucleotide sequence ID" value="NC_000962.3"/>
</dbReference>
<dbReference type="RefSeq" id="WP_003916735.1">
    <property type="nucleotide sequence ID" value="NZ_NVQJ01000001.1"/>
</dbReference>
<dbReference type="SMR" id="P9WFY3"/>
<dbReference type="STRING" id="83332.Rv0881"/>
<dbReference type="PaxDb" id="83332-Rv0881"/>
<dbReference type="DNASU" id="885121"/>
<dbReference type="GeneID" id="885121"/>
<dbReference type="KEGG" id="mtu:Rv0881"/>
<dbReference type="KEGG" id="mtv:RVBD_0881"/>
<dbReference type="TubercuList" id="Rv0881"/>
<dbReference type="eggNOG" id="COG0566">
    <property type="taxonomic scope" value="Bacteria"/>
</dbReference>
<dbReference type="InParanoid" id="P9WFY3"/>
<dbReference type="OrthoDB" id="3190829at2"/>
<dbReference type="PhylomeDB" id="P9WFY3"/>
<dbReference type="Proteomes" id="UP000001584">
    <property type="component" value="Chromosome"/>
</dbReference>
<dbReference type="GO" id="GO:0003723">
    <property type="term" value="F:RNA binding"/>
    <property type="evidence" value="ECO:0007669"/>
    <property type="project" value="InterPro"/>
</dbReference>
<dbReference type="GO" id="GO:0008173">
    <property type="term" value="F:RNA methyltransferase activity"/>
    <property type="evidence" value="ECO:0007669"/>
    <property type="project" value="InterPro"/>
</dbReference>
<dbReference type="GO" id="GO:0032259">
    <property type="term" value="P:methylation"/>
    <property type="evidence" value="ECO:0007669"/>
    <property type="project" value="UniProtKB-KW"/>
</dbReference>
<dbReference type="GO" id="GO:0006396">
    <property type="term" value="P:RNA processing"/>
    <property type="evidence" value="ECO:0007669"/>
    <property type="project" value="InterPro"/>
</dbReference>
<dbReference type="CDD" id="cd18095">
    <property type="entry name" value="SpoU-like_rRNA-MTase"/>
    <property type="match status" value="1"/>
</dbReference>
<dbReference type="Gene3D" id="3.40.1280.10">
    <property type="match status" value="1"/>
</dbReference>
<dbReference type="InterPro" id="IPR029028">
    <property type="entry name" value="Alpha/beta_knot_MTases"/>
</dbReference>
<dbReference type="InterPro" id="IPR029064">
    <property type="entry name" value="Ribosomal_eL30-like_sf"/>
</dbReference>
<dbReference type="InterPro" id="IPR051259">
    <property type="entry name" value="rRNA_Methyltransferase"/>
</dbReference>
<dbReference type="InterPro" id="IPR001537">
    <property type="entry name" value="SpoU_MeTrfase"/>
</dbReference>
<dbReference type="InterPro" id="IPR029026">
    <property type="entry name" value="tRNA_m1G_MTases_N"/>
</dbReference>
<dbReference type="PANTHER" id="PTHR43191:SF12">
    <property type="entry name" value="RRNA METHYLASE"/>
    <property type="match status" value="1"/>
</dbReference>
<dbReference type="PANTHER" id="PTHR43191">
    <property type="entry name" value="RRNA METHYLTRANSFERASE 3"/>
    <property type="match status" value="1"/>
</dbReference>
<dbReference type="Pfam" id="PF00588">
    <property type="entry name" value="SpoU_methylase"/>
    <property type="match status" value="1"/>
</dbReference>
<dbReference type="SUPFAM" id="SSF75217">
    <property type="entry name" value="alpha/beta knot"/>
    <property type="match status" value="1"/>
</dbReference>
<dbReference type="SUPFAM" id="SSF55315">
    <property type="entry name" value="L30e-like"/>
    <property type="match status" value="1"/>
</dbReference>
<keyword id="KW-0489">Methyltransferase</keyword>
<keyword id="KW-1185">Reference proteome</keyword>
<keyword id="KW-0808">Transferase</keyword>
<reference key="1">
    <citation type="journal article" date="1998" name="Nature">
        <title>Deciphering the biology of Mycobacterium tuberculosis from the complete genome sequence.</title>
        <authorList>
            <person name="Cole S.T."/>
            <person name="Brosch R."/>
            <person name="Parkhill J."/>
            <person name="Garnier T."/>
            <person name="Churcher C.M."/>
            <person name="Harris D.E."/>
            <person name="Gordon S.V."/>
            <person name="Eiglmeier K."/>
            <person name="Gas S."/>
            <person name="Barry C.E. III"/>
            <person name="Tekaia F."/>
            <person name="Badcock K."/>
            <person name="Basham D."/>
            <person name="Brown D."/>
            <person name="Chillingworth T."/>
            <person name="Connor R."/>
            <person name="Davies R.M."/>
            <person name="Devlin K."/>
            <person name="Feltwell T."/>
            <person name="Gentles S."/>
            <person name="Hamlin N."/>
            <person name="Holroyd S."/>
            <person name="Hornsby T."/>
            <person name="Jagels K."/>
            <person name="Krogh A."/>
            <person name="McLean J."/>
            <person name="Moule S."/>
            <person name="Murphy L.D."/>
            <person name="Oliver S."/>
            <person name="Osborne J."/>
            <person name="Quail M.A."/>
            <person name="Rajandream M.A."/>
            <person name="Rogers J."/>
            <person name="Rutter S."/>
            <person name="Seeger K."/>
            <person name="Skelton S."/>
            <person name="Squares S."/>
            <person name="Squares R."/>
            <person name="Sulston J.E."/>
            <person name="Taylor K."/>
            <person name="Whitehead S."/>
            <person name="Barrell B.G."/>
        </authorList>
    </citation>
    <scope>NUCLEOTIDE SEQUENCE [LARGE SCALE GENOMIC DNA]</scope>
    <source>
        <strain>ATCC 25618 / H37Rv</strain>
    </source>
</reference>
<protein>
    <recommendedName>
        <fullName>Uncharacterized tRNA/rRNA methyltransferase Rv0881</fullName>
        <ecNumber>2.1.1.-</ecNumber>
    </recommendedName>
</protein>
<organism>
    <name type="scientific">Mycobacterium tuberculosis (strain ATCC 25618 / H37Rv)</name>
    <dbReference type="NCBI Taxonomy" id="83332"/>
    <lineage>
        <taxon>Bacteria</taxon>
        <taxon>Bacillati</taxon>
        <taxon>Actinomycetota</taxon>
        <taxon>Actinomycetes</taxon>
        <taxon>Mycobacteriales</taxon>
        <taxon>Mycobacteriaceae</taxon>
        <taxon>Mycobacterium</taxon>
        <taxon>Mycobacterium tuberculosis complex</taxon>
    </lineage>
</organism>
<evidence type="ECO:0000256" key="1">
    <source>
        <dbReference type="SAM" id="MobiDB-lite"/>
    </source>
</evidence>
<evidence type="ECO:0000305" key="2"/>
<name>Y881_MYCTU</name>
<feature type="chain" id="PRO_0000159838" description="Uncharacterized tRNA/rRNA methyltransferase Rv0881">
    <location>
        <begin position="1"/>
        <end position="288"/>
    </location>
</feature>
<feature type="region of interest" description="Disordered" evidence="1">
    <location>
        <begin position="1"/>
        <end position="20"/>
    </location>
</feature>
<feature type="compositionally biased region" description="Basic and acidic residues" evidence="1">
    <location>
        <begin position="1"/>
        <end position="12"/>
    </location>
</feature>
<accession>P9WFY3</accession>
<accession>L0T6Q0</accession>
<accession>Q10543</accession>
<comment type="similarity">
    <text evidence="2">Belongs to the class IV-like SAM-binding methyltransferase superfamily. RNA methyltransferase TrmH family.</text>
</comment>